<feature type="chain" id="PRO_0000079279" description="VPS9 domain-containing protein 1">
    <location>
        <begin position="1"/>
        <end position="631"/>
    </location>
</feature>
<feature type="domain" description="VPS9" evidence="3">
    <location>
        <begin position="467"/>
        <end position="630"/>
    </location>
</feature>
<feature type="region of interest" description="Disordered" evidence="4">
    <location>
        <begin position="318"/>
        <end position="379"/>
    </location>
</feature>
<feature type="coiled-coil region" evidence="2">
    <location>
        <begin position="187"/>
        <end position="221"/>
    </location>
</feature>
<feature type="compositionally biased region" description="Pro residues" evidence="4">
    <location>
        <begin position="337"/>
        <end position="362"/>
    </location>
</feature>
<feature type="modified residue" description="Phosphoserine" evidence="1">
    <location>
        <position position="116"/>
    </location>
</feature>
<feature type="splice variant" id="VSP_040306" description="In isoform 2." evidence="6">
    <original>MAAAAGDGTVKPLQSAMKLANGAIELDTGNRPR</original>
    <variation>MLLCPAQKTVFRLQLTTAAQCLWVYLRDKQVVVFLAYPTRAPGRNNGVTSLHWPDPTLSLSWTQ</variation>
    <location>
        <begin position="1"/>
        <end position="33"/>
    </location>
</feature>
<feature type="sequence conflict" description="In Ref. 1; BAA76711." evidence="7" ref="1">
    <original>QV</original>
    <variation>KF</variation>
    <location>
        <begin position="225"/>
        <end position="226"/>
    </location>
</feature>
<feature type="sequence conflict" description="In Ref. 1; BAA76711." evidence="7" ref="1">
    <original>R</original>
    <variation>P</variation>
    <location>
        <position position="392"/>
    </location>
</feature>
<name>VP9D1_HUMAN</name>
<reference key="1">
    <citation type="journal article" date="1999" name="DNA Res.">
        <title>Isolation and mapping of putative b subunit of human ATPase (ATP-BL) from human leukocytes.</title>
        <authorList>
            <person name="Sugimoto J."/>
            <person name="Hatakeyama T."/>
            <person name="Isobe M."/>
        </authorList>
    </citation>
    <scope>NUCLEOTIDE SEQUENCE [MRNA] (ISOFORM 2)</scope>
    <scope>TISSUE SPECIFICITY</scope>
    <source>
        <tissue>Leukocyte</tissue>
    </source>
</reference>
<reference key="2">
    <citation type="journal article" date="2004" name="Nature">
        <title>The sequence and analysis of duplication-rich human chromosome 16.</title>
        <authorList>
            <person name="Martin J."/>
            <person name="Han C."/>
            <person name="Gordon L.A."/>
            <person name="Terry A."/>
            <person name="Prabhakar S."/>
            <person name="She X."/>
            <person name="Xie G."/>
            <person name="Hellsten U."/>
            <person name="Chan Y.M."/>
            <person name="Altherr M."/>
            <person name="Couronne O."/>
            <person name="Aerts A."/>
            <person name="Bajorek E."/>
            <person name="Black S."/>
            <person name="Blumer H."/>
            <person name="Branscomb E."/>
            <person name="Brown N.C."/>
            <person name="Bruno W.J."/>
            <person name="Buckingham J.M."/>
            <person name="Callen D.F."/>
            <person name="Campbell C.S."/>
            <person name="Campbell M.L."/>
            <person name="Campbell E.W."/>
            <person name="Caoile C."/>
            <person name="Challacombe J.F."/>
            <person name="Chasteen L.A."/>
            <person name="Chertkov O."/>
            <person name="Chi H.C."/>
            <person name="Christensen M."/>
            <person name="Clark L.M."/>
            <person name="Cohn J.D."/>
            <person name="Denys M."/>
            <person name="Detter J.C."/>
            <person name="Dickson M."/>
            <person name="Dimitrijevic-Bussod M."/>
            <person name="Escobar J."/>
            <person name="Fawcett J.J."/>
            <person name="Flowers D."/>
            <person name="Fotopulos D."/>
            <person name="Glavina T."/>
            <person name="Gomez M."/>
            <person name="Gonzales E."/>
            <person name="Goodstein D."/>
            <person name="Goodwin L.A."/>
            <person name="Grady D.L."/>
            <person name="Grigoriev I."/>
            <person name="Groza M."/>
            <person name="Hammon N."/>
            <person name="Hawkins T."/>
            <person name="Haydu L."/>
            <person name="Hildebrand C.E."/>
            <person name="Huang W."/>
            <person name="Israni S."/>
            <person name="Jett J."/>
            <person name="Jewett P.B."/>
            <person name="Kadner K."/>
            <person name="Kimball H."/>
            <person name="Kobayashi A."/>
            <person name="Krawczyk M.-C."/>
            <person name="Leyba T."/>
            <person name="Longmire J.L."/>
            <person name="Lopez F."/>
            <person name="Lou Y."/>
            <person name="Lowry S."/>
            <person name="Ludeman T."/>
            <person name="Manohar C.F."/>
            <person name="Mark G.A."/>
            <person name="McMurray K.L."/>
            <person name="Meincke L.J."/>
            <person name="Morgan J."/>
            <person name="Moyzis R.K."/>
            <person name="Mundt M.O."/>
            <person name="Munk A.C."/>
            <person name="Nandkeshwar R.D."/>
            <person name="Pitluck S."/>
            <person name="Pollard M."/>
            <person name="Predki P."/>
            <person name="Parson-Quintana B."/>
            <person name="Ramirez L."/>
            <person name="Rash S."/>
            <person name="Retterer J."/>
            <person name="Ricke D.O."/>
            <person name="Robinson D.L."/>
            <person name="Rodriguez A."/>
            <person name="Salamov A."/>
            <person name="Saunders E.H."/>
            <person name="Scott D."/>
            <person name="Shough T."/>
            <person name="Stallings R.L."/>
            <person name="Stalvey M."/>
            <person name="Sutherland R.D."/>
            <person name="Tapia R."/>
            <person name="Tesmer J.G."/>
            <person name="Thayer N."/>
            <person name="Thompson L.S."/>
            <person name="Tice H."/>
            <person name="Torney D.C."/>
            <person name="Tran-Gyamfi M."/>
            <person name="Tsai M."/>
            <person name="Ulanovsky L.E."/>
            <person name="Ustaszewska A."/>
            <person name="Vo N."/>
            <person name="White P.S."/>
            <person name="Williams A.L."/>
            <person name="Wills P.L."/>
            <person name="Wu J.-R."/>
            <person name="Wu K."/>
            <person name="Yang J."/>
            <person name="DeJong P."/>
            <person name="Bruce D."/>
            <person name="Doggett N.A."/>
            <person name="Deaven L."/>
            <person name="Schmutz J."/>
            <person name="Grimwood J."/>
            <person name="Richardson P."/>
            <person name="Rokhsar D.S."/>
            <person name="Eichler E.E."/>
            <person name="Gilna P."/>
            <person name="Lucas S.M."/>
            <person name="Myers R.M."/>
            <person name="Rubin E.M."/>
            <person name="Pennacchio L.A."/>
        </authorList>
    </citation>
    <scope>NUCLEOTIDE SEQUENCE [LARGE SCALE GENOMIC DNA]</scope>
</reference>
<sequence>MAAAAGDGTVKPLQSAMKLANGAIELDTGNRPREAYTEYLRSIHYISQVLLEEVETTKEAGETVPPDTSKMLKLAQQCLERAQSTAAKLGKTRLKPTMPAAAPIPQPAGRHRRVYSDEGGKLSPFLPPEIFQKLQGAESQSCKKELTPLEEASLQNQKLKAAYEARMARLDPSQAMQKTSLTLSLQRQMMENLVIAKAREETLQRKMEERRLRLQEAANRRFCSQVALTPEEREQRALYAAILEYEQDHDWPKHWKAKLKRNPGDLSLVTSLVSHLLSLPDHPIAQLLRRLQCSVYSALYPAVSRAAAPAPGCCPPTPNPGSRRLRPSQSLHCMLSPPEPSAAPRPQDSPPTPPLQPGPVGSPSPLGDTASGLPDKDSSFEDLEQFLGTSERQGRGRGVQPEPQLQQLKTAVEEIHNAVDRLLSLTLLAFEGLNTAASKDRCLACIEEPFFSPLWPLLLALYRSVHRAREAALSRSMELYRNAPPTAIGIPTKLLPQNPEAKGATGYPYCAAAQELGLLVLESCPQKKLECIVRTLRIICVCAEDYCPTPEATPQAGPPPIAAAAIGADDLLPILSFVVLRSGLPQLVSECAALEEFIHEGYLIGEEGYCLTSLQSALSYVELLPRGGLAK</sequence>
<evidence type="ECO:0000250" key="1">
    <source>
        <dbReference type="UniProtKB" id="Q8C190"/>
    </source>
</evidence>
<evidence type="ECO:0000255" key="2"/>
<evidence type="ECO:0000255" key="3">
    <source>
        <dbReference type="PROSITE-ProRule" id="PRU00550"/>
    </source>
</evidence>
<evidence type="ECO:0000256" key="4">
    <source>
        <dbReference type="SAM" id="MobiDB-lite"/>
    </source>
</evidence>
<evidence type="ECO:0000269" key="5">
    <source>
    </source>
</evidence>
<evidence type="ECO:0000303" key="6">
    <source>
    </source>
</evidence>
<evidence type="ECO:0000305" key="7"/>
<comment type="interaction">
    <interactant intactId="EBI-9031083">
        <id>Q9Y2B5</id>
    </interactant>
    <interactant intactId="EBI-10308705">
        <id>Q9H7C9</id>
        <label>AAMDC</label>
    </interactant>
    <organismsDiffer>false</organismsDiffer>
    <experiments>3</experiments>
</comment>
<comment type="interaction">
    <interactant intactId="EBI-9031083">
        <id>Q9Y2B5</id>
    </interactant>
    <interactant intactId="EBI-720250">
        <id>Q9NZD4</id>
        <label>AHSP</label>
    </interactant>
    <organismsDiffer>false</organismsDiffer>
    <experiments>3</experiments>
</comment>
<comment type="interaction">
    <interactant intactId="EBI-9031083">
        <id>Q9Y2B5</id>
    </interactant>
    <interactant intactId="EBI-11745576">
        <id>Q6PJH3</id>
        <label>AKAP9</label>
    </interactant>
    <organismsDiffer>false</organismsDiffer>
    <experiments>3</experiments>
</comment>
<comment type="interaction">
    <interactant intactId="EBI-9031083">
        <id>Q9Y2B5</id>
    </interactant>
    <interactant intactId="EBI-745689">
        <id>Q7L5A3</id>
        <label>ATOSB</label>
    </interactant>
    <organismsDiffer>false</organismsDiffer>
    <experiments>3</experiments>
</comment>
<comment type="interaction">
    <interactant intactId="EBI-9031083">
        <id>Q9Y2B5</id>
    </interactant>
    <interactant intactId="EBI-2548868">
        <id>P0C7W6</id>
        <label>CCDC172</label>
    </interactant>
    <organismsDiffer>false</organismsDiffer>
    <experiments>3</experiments>
</comment>
<comment type="interaction">
    <interactant intactId="EBI-9031083">
        <id>Q9Y2B5</id>
    </interactant>
    <interactant intactId="EBI-10175300">
        <id>Q8TD31-3</id>
        <label>CCHCR1</label>
    </interactant>
    <organismsDiffer>false</organismsDiffer>
    <experiments>3</experiments>
</comment>
<comment type="interaction">
    <interactant intactId="EBI-9031083">
        <id>Q9Y2B5</id>
    </interactant>
    <interactant intactId="EBI-740680">
        <id>Q8WWB3</id>
        <label>DYDC1</label>
    </interactant>
    <organismsDiffer>false</organismsDiffer>
    <experiments>3</experiments>
</comment>
<comment type="interaction">
    <interactant intactId="EBI-9031083">
        <id>Q9Y2B5</id>
    </interactant>
    <interactant intactId="EBI-945994">
        <id>P53990</id>
        <label>IST1</label>
    </interactant>
    <organismsDiffer>false</organismsDiffer>
    <experiments>2</experiments>
</comment>
<comment type="interaction">
    <interactant intactId="EBI-9031083">
        <id>Q9Y2B5</id>
    </interactant>
    <interactant intactId="EBI-948001">
        <id>Q15323</id>
        <label>KRT31</label>
    </interactant>
    <organismsDiffer>false</organismsDiffer>
    <experiments>3</experiments>
</comment>
<comment type="interaction">
    <interactant intactId="EBI-9031083">
        <id>Q9Y2B5</id>
    </interactant>
    <interactant intactId="EBI-1058674">
        <id>Q92764</id>
        <label>KRT35</label>
    </interactant>
    <organismsDiffer>false</organismsDiffer>
    <experiments>3</experiments>
</comment>
<comment type="interaction">
    <interactant intactId="EBI-9031083">
        <id>Q9Y2B5</id>
    </interactant>
    <interactant intactId="EBI-11958242">
        <id>Q6A163</id>
        <label>KRT39</label>
    </interactant>
    <organismsDiffer>false</organismsDiffer>
    <experiments>3</experiments>
</comment>
<comment type="interaction">
    <interactant intactId="EBI-9031083">
        <id>Q9Y2B5</id>
    </interactant>
    <interactant intactId="EBI-720768">
        <id>Q9H492</id>
        <label>MAP1LC3A</label>
    </interactant>
    <organismsDiffer>false</organismsDiffer>
    <experiments>6</experiments>
</comment>
<comment type="interaction">
    <interactant intactId="EBI-9031083">
        <id>Q9Y2B5</id>
    </interactant>
    <interactant intactId="EBI-2340269">
        <id>Q13064</id>
        <label>MKRN3</label>
    </interactant>
    <organismsDiffer>false</organismsDiffer>
    <experiments>3</experiments>
</comment>
<comment type="interaction">
    <interactant intactId="EBI-9031083">
        <id>Q9Y2B5</id>
    </interactant>
    <interactant intactId="EBI-302345">
        <id>Q8ND90</id>
        <label>PNMA1</label>
    </interactant>
    <organismsDiffer>false</organismsDiffer>
    <experiments>3</experiments>
</comment>
<comment type="interaction">
    <interactant intactId="EBI-9031083">
        <id>Q9Y2B5</id>
    </interactant>
    <interactant intactId="EBI-12029004">
        <id>P78424</id>
        <label>POU6F2</label>
    </interactant>
    <organismsDiffer>false</organismsDiffer>
    <experiments>3</experiments>
</comment>
<comment type="interaction">
    <interactant intactId="EBI-9031083">
        <id>Q9Y2B5</id>
    </interactant>
    <interactant intactId="EBI-357648">
        <id>Q13200</id>
        <label>PSMD2</label>
    </interactant>
    <organismsDiffer>false</organismsDiffer>
    <experiments>3</experiments>
</comment>
<comment type="interaction">
    <interactant intactId="EBI-9031083">
        <id>Q9Y2B5</id>
    </interactant>
    <interactant intactId="EBI-1055693">
        <id>O75771</id>
        <label>RAD51D</label>
    </interactant>
    <organismsDiffer>false</organismsDiffer>
    <experiments>3</experiments>
</comment>
<comment type="interaction">
    <interactant intactId="EBI-9031083">
        <id>Q9Y2B5</id>
    </interactant>
    <interactant intactId="EBI-748350">
        <id>Q9UHP6</id>
        <label>RSPH14</label>
    </interactant>
    <organismsDiffer>false</organismsDiffer>
    <experiments>3</experiments>
</comment>
<comment type="interaction">
    <interactant intactId="EBI-9031083">
        <id>Q9Y2B5</id>
    </interactant>
    <interactant intactId="EBI-745392">
        <id>Q9BSW7</id>
        <label>SYT17</label>
    </interactant>
    <organismsDiffer>false</organismsDiffer>
    <experiments>3</experiments>
</comment>
<comment type="interaction">
    <interactant intactId="EBI-9031083">
        <id>Q9Y2B5</id>
    </interactant>
    <interactant intactId="EBI-81290">
        <id>P19474</id>
        <label>TRIM21</label>
    </interactant>
    <organismsDiffer>false</organismsDiffer>
    <experiments>3</experiments>
</comment>
<comment type="interaction">
    <interactant intactId="EBI-9031083">
        <id>Q9Y2B5</id>
    </interactant>
    <interactant intactId="EBI-719493">
        <id>P14373</id>
        <label>TRIM27</label>
    </interactant>
    <organismsDiffer>false</organismsDiffer>
    <experiments>3</experiments>
</comment>
<comment type="interaction">
    <interactant intactId="EBI-9031083">
        <id>Q9Y2B5</id>
    </interactant>
    <interactant intactId="EBI-2130429">
        <id>Q9BYV2</id>
        <label>TRIM54</label>
    </interactant>
    <organismsDiffer>false</organismsDiffer>
    <experiments>3</experiments>
</comment>
<comment type="interaction">
    <interactant intactId="EBI-9031083">
        <id>Q9Y2B5</id>
    </interactant>
    <interactant intactId="EBI-8656864">
        <id>Q6PF05</id>
        <label>TTC23L</label>
    </interactant>
    <organismsDiffer>false</organismsDiffer>
    <experiments>3</experiments>
</comment>
<comment type="interaction">
    <interactant intactId="EBI-9031083">
        <id>Q9Y2B5</id>
    </interactant>
    <interactant intactId="EBI-11524408">
        <id>Q5T124-6</id>
        <label>UBXN11</label>
    </interactant>
    <organismsDiffer>false</organismsDiffer>
    <experiments>3</experiments>
</comment>
<comment type="interaction">
    <interactant intactId="EBI-9031083">
        <id>Q9Y2B5</id>
    </interactant>
    <interactant intactId="EBI-9031083">
        <id>Q9Y2B5</id>
        <label>VPS9D1</label>
    </interactant>
    <organismsDiffer>false</organismsDiffer>
    <experiments>3</experiments>
</comment>
<comment type="interaction">
    <interactant intactId="EBI-9031083">
        <id>Q9Y2B5</id>
    </interactant>
    <interactant intactId="EBI-625509">
        <id>Q8N720</id>
        <label>ZNF655</label>
    </interactant>
    <organismsDiffer>false</organismsDiffer>
    <experiments>3</experiments>
</comment>
<comment type="alternative products">
    <event type="alternative splicing"/>
    <isoform>
        <id>Q9Y2B5-1</id>
        <name>1</name>
        <sequence type="displayed"/>
    </isoform>
    <isoform>
        <id>Q9Y2B5-2</id>
        <name>2</name>
        <sequence type="described" ref="VSP_040306"/>
    </isoform>
</comment>
<comment type="tissue specificity">
    <text evidence="5">Ubiquitous.</text>
</comment>
<comment type="sequence caution" evidence="7">
    <conflict type="frameshift">
        <sequence resource="EMBL-CDS" id="BAA76711"/>
    </conflict>
</comment>
<gene>
    <name type="primary">VPS9D1</name>
    <name type="synonym">ATPBL</name>
    <name type="synonym">C16orf7</name>
</gene>
<accession>Q9Y2B5</accession>
<keyword id="KW-0025">Alternative splicing</keyword>
<keyword id="KW-0175">Coiled coil</keyword>
<keyword id="KW-0343">GTPase activation</keyword>
<keyword id="KW-0597">Phosphoprotein</keyword>
<keyword id="KW-1267">Proteomics identification</keyword>
<keyword id="KW-1185">Reference proteome</keyword>
<protein>
    <recommendedName>
        <fullName>VPS9 domain-containing protein 1</fullName>
    </recommendedName>
    <alternativeName>
        <fullName>Protein ATP-BL</fullName>
    </alternativeName>
</protein>
<organism>
    <name type="scientific">Homo sapiens</name>
    <name type="common">Human</name>
    <dbReference type="NCBI Taxonomy" id="9606"/>
    <lineage>
        <taxon>Eukaryota</taxon>
        <taxon>Metazoa</taxon>
        <taxon>Chordata</taxon>
        <taxon>Craniata</taxon>
        <taxon>Vertebrata</taxon>
        <taxon>Euteleostomi</taxon>
        <taxon>Mammalia</taxon>
        <taxon>Eutheria</taxon>
        <taxon>Euarchontoglires</taxon>
        <taxon>Primates</taxon>
        <taxon>Haplorrhini</taxon>
        <taxon>Catarrhini</taxon>
        <taxon>Hominidae</taxon>
        <taxon>Homo</taxon>
    </lineage>
</organism>
<proteinExistence type="evidence at protein level"/>
<dbReference type="EMBL" id="AB018551">
    <property type="protein sequence ID" value="BAA76711.1"/>
    <property type="status" value="ALT_FRAME"/>
    <property type="molecule type" value="mRNA"/>
</dbReference>
<dbReference type="EMBL" id="AC010538">
    <property type="status" value="NOT_ANNOTATED_CDS"/>
    <property type="molecule type" value="Genomic_DNA"/>
</dbReference>
<dbReference type="CCDS" id="CCDS42220.1">
    <molecule id="Q9Y2B5-1"/>
</dbReference>
<dbReference type="RefSeq" id="NP_004904.2">
    <molecule id="Q9Y2B5-1"/>
    <property type="nucleotide sequence ID" value="NM_004913.3"/>
</dbReference>
<dbReference type="SMR" id="Q9Y2B5"/>
<dbReference type="BioGRID" id="114969">
    <property type="interactions" value="47"/>
</dbReference>
<dbReference type="FunCoup" id="Q9Y2B5">
    <property type="interactions" value="922"/>
</dbReference>
<dbReference type="IntAct" id="Q9Y2B5">
    <property type="interactions" value="37"/>
</dbReference>
<dbReference type="STRING" id="9606.ENSP00000374037"/>
<dbReference type="GlyGen" id="Q9Y2B5">
    <property type="glycosylation" value="1 site"/>
</dbReference>
<dbReference type="iPTMnet" id="Q9Y2B5"/>
<dbReference type="PhosphoSitePlus" id="Q9Y2B5"/>
<dbReference type="BioMuta" id="VPS9D1"/>
<dbReference type="DMDM" id="317373349"/>
<dbReference type="jPOST" id="Q9Y2B5"/>
<dbReference type="MassIVE" id="Q9Y2B5"/>
<dbReference type="PaxDb" id="9606-ENSP00000374037"/>
<dbReference type="PeptideAtlas" id="Q9Y2B5"/>
<dbReference type="ProteomicsDB" id="85720">
    <molecule id="Q9Y2B5-1"/>
</dbReference>
<dbReference type="ProteomicsDB" id="85721">
    <molecule id="Q9Y2B5-2"/>
</dbReference>
<dbReference type="Antibodypedia" id="1753">
    <property type="antibodies" value="30 antibodies from 7 providers"/>
</dbReference>
<dbReference type="DNASU" id="9605"/>
<dbReference type="Ensembl" id="ENST00000389386.8">
    <molecule id="Q9Y2B5-1"/>
    <property type="protein sequence ID" value="ENSP00000374037.3"/>
    <property type="gene ID" value="ENSG00000075399.14"/>
</dbReference>
<dbReference type="GeneID" id="9605"/>
<dbReference type="KEGG" id="hsa:9605"/>
<dbReference type="MANE-Select" id="ENST00000389386.8">
    <property type="protein sequence ID" value="ENSP00000374037.3"/>
    <property type="RefSeq nucleotide sequence ID" value="NM_004913.3"/>
    <property type="RefSeq protein sequence ID" value="NP_004904.2"/>
</dbReference>
<dbReference type="UCSC" id="uc002fom.2">
    <molecule id="Q9Y2B5-1"/>
    <property type="organism name" value="human"/>
</dbReference>
<dbReference type="AGR" id="HGNC:13526"/>
<dbReference type="CTD" id="9605"/>
<dbReference type="DisGeNET" id="9605"/>
<dbReference type="GeneCards" id="VPS9D1"/>
<dbReference type="HGNC" id="HGNC:13526">
    <property type="gene designation" value="VPS9D1"/>
</dbReference>
<dbReference type="HPA" id="ENSG00000075399">
    <property type="expression patterns" value="Low tissue specificity"/>
</dbReference>
<dbReference type="MIM" id="619292">
    <property type="type" value="gene"/>
</dbReference>
<dbReference type="neXtProt" id="NX_Q9Y2B5"/>
<dbReference type="OpenTargets" id="ENSG00000075399"/>
<dbReference type="PharmGKB" id="PA25562"/>
<dbReference type="VEuPathDB" id="HostDB:ENSG00000075399"/>
<dbReference type="eggNOG" id="ENOG502QSSQ">
    <property type="taxonomic scope" value="Eukaryota"/>
</dbReference>
<dbReference type="GeneTree" id="ENSGT00390000015057"/>
<dbReference type="InParanoid" id="Q9Y2B5"/>
<dbReference type="OMA" id="CLKPAMP"/>
<dbReference type="OrthoDB" id="10264848at2759"/>
<dbReference type="PAN-GO" id="Q9Y2B5">
    <property type="GO annotations" value="4 GO annotations based on evolutionary models"/>
</dbReference>
<dbReference type="PhylomeDB" id="Q9Y2B5"/>
<dbReference type="TreeFam" id="TF332037"/>
<dbReference type="BioCyc" id="MetaCyc:ENSG00000075399-MONOMER"/>
<dbReference type="PathwayCommons" id="Q9Y2B5"/>
<dbReference type="SignaLink" id="Q9Y2B5"/>
<dbReference type="BioGRID-ORCS" id="9605">
    <property type="hits" value="15 hits in 1157 CRISPR screens"/>
</dbReference>
<dbReference type="ChiTaRS" id="VPS9D1">
    <property type="organism name" value="human"/>
</dbReference>
<dbReference type="GeneWiki" id="C16orf7"/>
<dbReference type="GenomeRNAi" id="9605"/>
<dbReference type="Pharos" id="Q9Y2B5">
    <property type="development level" value="Tdark"/>
</dbReference>
<dbReference type="PRO" id="PR:Q9Y2B5"/>
<dbReference type="Proteomes" id="UP000005640">
    <property type="component" value="Chromosome 16"/>
</dbReference>
<dbReference type="RNAct" id="Q9Y2B5">
    <property type="molecule type" value="protein"/>
</dbReference>
<dbReference type="Bgee" id="ENSG00000075399">
    <property type="expression patterns" value="Expressed in right frontal lobe and 137 other cell types or tissues"/>
</dbReference>
<dbReference type="ExpressionAtlas" id="Q9Y2B5">
    <property type="expression patterns" value="baseline and differential"/>
</dbReference>
<dbReference type="GO" id="GO:0005829">
    <property type="term" value="C:cytosol"/>
    <property type="evidence" value="ECO:0000318"/>
    <property type="project" value="GO_Central"/>
</dbReference>
<dbReference type="GO" id="GO:0030139">
    <property type="term" value="C:endocytic vesicle"/>
    <property type="evidence" value="ECO:0000318"/>
    <property type="project" value="GO_Central"/>
</dbReference>
<dbReference type="GO" id="GO:0005096">
    <property type="term" value="F:GTPase activator activity"/>
    <property type="evidence" value="ECO:0007669"/>
    <property type="project" value="UniProtKB-KW"/>
</dbReference>
<dbReference type="GO" id="GO:0005085">
    <property type="term" value="F:guanyl-nucleotide exchange factor activity"/>
    <property type="evidence" value="ECO:0000318"/>
    <property type="project" value="GO_Central"/>
</dbReference>
<dbReference type="GO" id="GO:0042802">
    <property type="term" value="F:identical protein binding"/>
    <property type="evidence" value="ECO:0000353"/>
    <property type="project" value="IntAct"/>
</dbReference>
<dbReference type="GO" id="GO:0031267">
    <property type="term" value="F:small GTPase binding"/>
    <property type="evidence" value="ECO:0000318"/>
    <property type="project" value="GO_Central"/>
</dbReference>
<dbReference type="GO" id="GO:0015986">
    <property type="term" value="P:proton motive force-driven ATP synthesis"/>
    <property type="evidence" value="ECO:0000304"/>
    <property type="project" value="ProtInc"/>
</dbReference>
<dbReference type="GO" id="GO:0016192">
    <property type="term" value="P:vesicle-mediated transport"/>
    <property type="evidence" value="ECO:0007669"/>
    <property type="project" value="InterPro"/>
</dbReference>
<dbReference type="FunFam" id="1.20.1050.80:FF:000011">
    <property type="entry name" value="VPS9 domain containing 1"/>
    <property type="match status" value="1"/>
</dbReference>
<dbReference type="Gene3D" id="1.20.1050.80">
    <property type="entry name" value="VPS9 domain"/>
    <property type="match status" value="1"/>
</dbReference>
<dbReference type="InterPro" id="IPR003123">
    <property type="entry name" value="VPS9"/>
</dbReference>
<dbReference type="InterPro" id="IPR045046">
    <property type="entry name" value="Vps9-like"/>
</dbReference>
<dbReference type="InterPro" id="IPR037191">
    <property type="entry name" value="VPS9_dom_sf"/>
</dbReference>
<dbReference type="PANTHER" id="PTHR23101">
    <property type="entry name" value="RAB GDP/GTP EXCHANGE FACTOR"/>
    <property type="match status" value="1"/>
</dbReference>
<dbReference type="PANTHER" id="PTHR23101:SF98">
    <property type="entry name" value="VPS9 DOMAIN-CONTAINING PROTEIN 1"/>
    <property type="match status" value="1"/>
</dbReference>
<dbReference type="Pfam" id="PF02204">
    <property type="entry name" value="VPS9"/>
    <property type="match status" value="1"/>
</dbReference>
<dbReference type="SMART" id="SM00167">
    <property type="entry name" value="VPS9"/>
    <property type="match status" value="1"/>
</dbReference>
<dbReference type="SUPFAM" id="SSF109993">
    <property type="entry name" value="VPS9 domain"/>
    <property type="match status" value="1"/>
</dbReference>
<dbReference type="PROSITE" id="PS51205">
    <property type="entry name" value="VPS9"/>
    <property type="match status" value="1"/>
</dbReference>